<sequence>MQARANARSARRRAREFALQGVYAWLLRGGEGTQDAGEIDAHLRDAEDFSEADAQWFKTLLHGVLREAPVLRERFLPYIDRPLAELSPVEHGILLIGSFELMHHVEVPYKVAINEAVELAKSFGGTDGFKFVNGVLDKLAADVRTAEVQAAPRR</sequence>
<accession>Q7VTN3</accession>
<protein>
    <recommendedName>
        <fullName evidence="1">Transcription antitermination protein NusB</fullName>
    </recommendedName>
    <alternativeName>
        <fullName evidence="1">Antitermination factor NusB</fullName>
    </alternativeName>
</protein>
<proteinExistence type="inferred from homology"/>
<organism>
    <name type="scientific">Bordetella pertussis (strain Tohama I / ATCC BAA-589 / NCTC 13251)</name>
    <dbReference type="NCBI Taxonomy" id="257313"/>
    <lineage>
        <taxon>Bacteria</taxon>
        <taxon>Pseudomonadati</taxon>
        <taxon>Pseudomonadota</taxon>
        <taxon>Betaproteobacteria</taxon>
        <taxon>Burkholderiales</taxon>
        <taxon>Alcaligenaceae</taxon>
        <taxon>Bordetella</taxon>
    </lineage>
</organism>
<feature type="chain" id="PRO_0000176513" description="Transcription antitermination protein NusB">
    <location>
        <begin position="1"/>
        <end position="154"/>
    </location>
</feature>
<gene>
    <name evidence="1" type="primary">nusB</name>
    <name type="ordered locus">BP3486</name>
</gene>
<keyword id="KW-1185">Reference proteome</keyword>
<keyword id="KW-0694">RNA-binding</keyword>
<keyword id="KW-0804">Transcription</keyword>
<keyword id="KW-0889">Transcription antitermination</keyword>
<keyword id="KW-0805">Transcription regulation</keyword>
<comment type="function">
    <text evidence="1">Involved in transcription antitermination. Required for transcription of ribosomal RNA (rRNA) genes. Binds specifically to the boxA antiterminator sequence of the ribosomal RNA (rrn) operons.</text>
</comment>
<comment type="similarity">
    <text evidence="1">Belongs to the NusB family.</text>
</comment>
<name>NUSB_BORPE</name>
<reference key="1">
    <citation type="journal article" date="2003" name="Nat. Genet.">
        <title>Comparative analysis of the genome sequences of Bordetella pertussis, Bordetella parapertussis and Bordetella bronchiseptica.</title>
        <authorList>
            <person name="Parkhill J."/>
            <person name="Sebaihia M."/>
            <person name="Preston A."/>
            <person name="Murphy L.D."/>
            <person name="Thomson N.R."/>
            <person name="Harris D.E."/>
            <person name="Holden M.T.G."/>
            <person name="Churcher C.M."/>
            <person name="Bentley S.D."/>
            <person name="Mungall K.L."/>
            <person name="Cerdeno-Tarraga A.-M."/>
            <person name="Temple L."/>
            <person name="James K.D."/>
            <person name="Harris B."/>
            <person name="Quail M.A."/>
            <person name="Achtman M."/>
            <person name="Atkin R."/>
            <person name="Baker S."/>
            <person name="Basham D."/>
            <person name="Bason N."/>
            <person name="Cherevach I."/>
            <person name="Chillingworth T."/>
            <person name="Collins M."/>
            <person name="Cronin A."/>
            <person name="Davis P."/>
            <person name="Doggett J."/>
            <person name="Feltwell T."/>
            <person name="Goble A."/>
            <person name="Hamlin N."/>
            <person name="Hauser H."/>
            <person name="Holroyd S."/>
            <person name="Jagels K."/>
            <person name="Leather S."/>
            <person name="Moule S."/>
            <person name="Norberczak H."/>
            <person name="O'Neil S."/>
            <person name="Ormond D."/>
            <person name="Price C."/>
            <person name="Rabbinowitsch E."/>
            <person name="Rutter S."/>
            <person name="Sanders M."/>
            <person name="Saunders D."/>
            <person name="Seeger K."/>
            <person name="Sharp S."/>
            <person name="Simmonds M."/>
            <person name="Skelton J."/>
            <person name="Squares R."/>
            <person name="Squares S."/>
            <person name="Stevens K."/>
            <person name="Unwin L."/>
            <person name="Whitehead S."/>
            <person name="Barrell B.G."/>
            <person name="Maskell D.J."/>
        </authorList>
    </citation>
    <scope>NUCLEOTIDE SEQUENCE [LARGE SCALE GENOMIC DNA]</scope>
    <source>
        <strain>Tohama I / ATCC BAA-589 / NCTC 13251</strain>
    </source>
</reference>
<evidence type="ECO:0000255" key="1">
    <source>
        <dbReference type="HAMAP-Rule" id="MF_00073"/>
    </source>
</evidence>
<dbReference type="EMBL" id="BX640421">
    <property type="protein sequence ID" value="CAE43747.1"/>
    <property type="molecule type" value="Genomic_DNA"/>
</dbReference>
<dbReference type="RefSeq" id="NP_882005.1">
    <property type="nucleotide sequence ID" value="NC_002929.2"/>
</dbReference>
<dbReference type="RefSeq" id="WP_003808599.1">
    <property type="nucleotide sequence ID" value="NZ_CP039022.1"/>
</dbReference>
<dbReference type="SMR" id="Q7VTN3"/>
<dbReference type="STRING" id="257313.BP3486"/>
<dbReference type="PaxDb" id="257313-BP3486"/>
<dbReference type="GeneID" id="93202609"/>
<dbReference type="KEGG" id="bpe:BP3486"/>
<dbReference type="PATRIC" id="fig|257313.5.peg.3774"/>
<dbReference type="eggNOG" id="COG0781">
    <property type="taxonomic scope" value="Bacteria"/>
</dbReference>
<dbReference type="HOGENOM" id="CLU_087843_4_1_4"/>
<dbReference type="Proteomes" id="UP000002676">
    <property type="component" value="Chromosome"/>
</dbReference>
<dbReference type="GO" id="GO:0005829">
    <property type="term" value="C:cytosol"/>
    <property type="evidence" value="ECO:0007669"/>
    <property type="project" value="TreeGrafter"/>
</dbReference>
<dbReference type="GO" id="GO:0003723">
    <property type="term" value="F:RNA binding"/>
    <property type="evidence" value="ECO:0007669"/>
    <property type="project" value="UniProtKB-UniRule"/>
</dbReference>
<dbReference type="GO" id="GO:0006353">
    <property type="term" value="P:DNA-templated transcription termination"/>
    <property type="evidence" value="ECO:0007669"/>
    <property type="project" value="UniProtKB-UniRule"/>
</dbReference>
<dbReference type="GO" id="GO:0031564">
    <property type="term" value="P:transcription antitermination"/>
    <property type="evidence" value="ECO:0007669"/>
    <property type="project" value="UniProtKB-KW"/>
</dbReference>
<dbReference type="Gene3D" id="1.10.940.10">
    <property type="entry name" value="NusB-like"/>
    <property type="match status" value="1"/>
</dbReference>
<dbReference type="HAMAP" id="MF_00073">
    <property type="entry name" value="NusB"/>
    <property type="match status" value="1"/>
</dbReference>
<dbReference type="InterPro" id="IPR035926">
    <property type="entry name" value="NusB-like_sf"/>
</dbReference>
<dbReference type="InterPro" id="IPR011605">
    <property type="entry name" value="NusB_fam"/>
</dbReference>
<dbReference type="InterPro" id="IPR006027">
    <property type="entry name" value="NusB_RsmB_TIM44"/>
</dbReference>
<dbReference type="NCBIfam" id="TIGR01951">
    <property type="entry name" value="nusB"/>
    <property type="match status" value="1"/>
</dbReference>
<dbReference type="PANTHER" id="PTHR11078:SF3">
    <property type="entry name" value="ANTITERMINATION NUSB DOMAIN-CONTAINING PROTEIN"/>
    <property type="match status" value="1"/>
</dbReference>
<dbReference type="PANTHER" id="PTHR11078">
    <property type="entry name" value="N UTILIZATION SUBSTANCE PROTEIN B-RELATED"/>
    <property type="match status" value="1"/>
</dbReference>
<dbReference type="Pfam" id="PF01029">
    <property type="entry name" value="NusB"/>
    <property type="match status" value="1"/>
</dbReference>
<dbReference type="SUPFAM" id="SSF48013">
    <property type="entry name" value="NusB-like"/>
    <property type="match status" value="1"/>
</dbReference>